<evidence type="ECO:0000255" key="1">
    <source>
        <dbReference type="HAMAP-Rule" id="MF_01445"/>
    </source>
</evidence>
<sequence length="337" mass="35998">MRVLGIETSCDETGIAIYDDKKGLLANQLYSQVKLHADYGGVVPELASRDHVRKTVPLIQAALKEAALTASDIDAVAYTAGPGLVGALLVGATVGRSLAFAWNVPAIPVHHMEGHLLAPMLEDNPPDFPFVALLVSGGHTQLISVTGIGQYELLGESIDDAAGEAFDKTAKLLGLDYPGGPMLSKMASQGTAGRFVFPRPMTDRPGLDFSFSGLKTFAANTIRSNGDDEQTRADIARAFEDAVVDTLMIKCKRALESTGFKRLVMAGGVSANRTLRAKLAEMMQKRRGEVFYARPEFCTDNGAMIAYAGMVRFKAGVTADLGVTVRPRWPLAELPAA</sequence>
<accession>Q8Z3M6</accession>
<accession>Q7C749</accession>
<name>TSAD_SALTI</name>
<reference key="1">
    <citation type="journal article" date="2001" name="Nature">
        <title>Complete genome sequence of a multiple drug resistant Salmonella enterica serovar Typhi CT18.</title>
        <authorList>
            <person name="Parkhill J."/>
            <person name="Dougan G."/>
            <person name="James K.D."/>
            <person name="Thomson N.R."/>
            <person name="Pickard D."/>
            <person name="Wain J."/>
            <person name="Churcher C.M."/>
            <person name="Mungall K.L."/>
            <person name="Bentley S.D."/>
            <person name="Holden M.T.G."/>
            <person name="Sebaihia M."/>
            <person name="Baker S."/>
            <person name="Basham D."/>
            <person name="Brooks K."/>
            <person name="Chillingworth T."/>
            <person name="Connerton P."/>
            <person name="Cronin A."/>
            <person name="Davis P."/>
            <person name="Davies R.M."/>
            <person name="Dowd L."/>
            <person name="White N."/>
            <person name="Farrar J."/>
            <person name="Feltwell T."/>
            <person name="Hamlin N."/>
            <person name="Haque A."/>
            <person name="Hien T.T."/>
            <person name="Holroyd S."/>
            <person name="Jagels K."/>
            <person name="Krogh A."/>
            <person name="Larsen T.S."/>
            <person name="Leather S."/>
            <person name="Moule S."/>
            <person name="O'Gaora P."/>
            <person name="Parry C."/>
            <person name="Quail M.A."/>
            <person name="Rutherford K.M."/>
            <person name="Simmonds M."/>
            <person name="Skelton J."/>
            <person name="Stevens K."/>
            <person name="Whitehead S."/>
            <person name="Barrell B.G."/>
        </authorList>
    </citation>
    <scope>NUCLEOTIDE SEQUENCE [LARGE SCALE GENOMIC DNA]</scope>
    <source>
        <strain>CT18</strain>
    </source>
</reference>
<reference key="2">
    <citation type="journal article" date="2003" name="J. Bacteriol.">
        <title>Comparative genomics of Salmonella enterica serovar Typhi strains Ty2 and CT18.</title>
        <authorList>
            <person name="Deng W."/>
            <person name="Liou S.-R."/>
            <person name="Plunkett G. III"/>
            <person name="Mayhew G.F."/>
            <person name="Rose D.J."/>
            <person name="Burland V."/>
            <person name="Kodoyianni V."/>
            <person name="Schwartz D.C."/>
            <person name="Blattner F.R."/>
        </authorList>
    </citation>
    <scope>NUCLEOTIDE SEQUENCE [LARGE SCALE GENOMIC DNA]</scope>
    <source>
        <strain>ATCC 700931 / Ty2</strain>
    </source>
</reference>
<protein>
    <recommendedName>
        <fullName evidence="1">tRNA N6-adenosine threonylcarbamoyltransferase</fullName>
        <ecNumber evidence="1">2.3.1.234</ecNumber>
    </recommendedName>
    <alternativeName>
        <fullName evidence="1">N6-L-threonylcarbamoyladenine synthase</fullName>
        <shortName evidence="1">t(6)A synthase</shortName>
    </alternativeName>
    <alternativeName>
        <fullName evidence="1">t(6)A37 threonylcarbamoyladenosine biosynthesis protein TsaD</fullName>
    </alternativeName>
    <alternativeName>
        <fullName evidence="1">tRNA threonylcarbamoyladenosine biosynthesis protein TsaD</fullName>
    </alternativeName>
</protein>
<keyword id="KW-0012">Acyltransferase</keyword>
<keyword id="KW-0963">Cytoplasm</keyword>
<keyword id="KW-0408">Iron</keyword>
<keyword id="KW-0479">Metal-binding</keyword>
<keyword id="KW-0808">Transferase</keyword>
<keyword id="KW-0819">tRNA processing</keyword>
<comment type="function">
    <text evidence="1">Required for the formation of a threonylcarbamoyl group on adenosine at position 37 (t(6)A37) in tRNAs that read codons beginning with adenine. Is involved in the transfer of the threonylcarbamoyl moiety of threonylcarbamoyl-AMP (TC-AMP) to the N6 group of A37, together with TsaE and TsaB. TsaD likely plays a direct catalytic role in this reaction.</text>
</comment>
<comment type="catalytic activity">
    <reaction evidence="1">
        <text>L-threonylcarbamoyladenylate + adenosine(37) in tRNA = N(6)-L-threonylcarbamoyladenosine(37) in tRNA + AMP + H(+)</text>
        <dbReference type="Rhea" id="RHEA:37059"/>
        <dbReference type="Rhea" id="RHEA-COMP:10162"/>
        <dbReference type="Rhea" id="RHEA-COMP:10163"/>
        <dbReference type="ChEBI" id="CHEBI:15378"/>
        <dbReference type="ChEBI" id="CHEBI:73682"/>
        <dbReference type="ChEBI" id="CHEBI:74411"/>
        <dbReference type="ChEBI" id="CHEBI:74418"/>
        <dbReference type="ChEBI" id="CHEBI:456215"/>
        <dbReference type="EC" id="2.3.1.234"/>
    </reaction>
</comment>
<comment type="cofactor">
    <cofactor evidence="1">
        <name>Fe(2+)</name>
        <dbReference type="ChEBI" id="CHEBI:29033"/>
    </cofactor>
    <text evidence="1">Binds 1 Fe(2+) ion per subunit.</text>
</comment>
<comment type="subcellular location">
    <subcellularLocation>
        <location evidence="1">Cytoplasm</location>
    </subcellularLocation>
</comment>
<comment type="similarity">
    <text evidence="1">Belongs to the KAE1 / TsaD family.</text>
</comment>
<dbReference type="EC" id="2.3.1.234" evidence="1"/>
<dbReference type="EMBL" id="AE014613">
    <property type="protein sequence ID" value="AAO70671.1"/>
    <property type="molecule type" value="Genomic_DNA"/>
</dbReference>
<dbReference type="EMBL" id="AL513382">
    <property type="protein sequence ID" value="CAD07733.1"/>
    <property type="molecule type" value="Genomic_DNA"/>
</dbReference>
<dbReference type="RefSeq" id="NP_457599.1">
    <property type="nucleotide sequence ID" value="NC_003198.1"/>
</dbReference>
<dbReference type="RefSeq" id="WP_001264383.1">
    <property type="nucleotide sequence ID" value="NZ_WSUR01000003.1"/>
</dbReference>
<dbReference type="SMR" id="Q8Z3M6"/>
<dbReference type="STRING" id="220341.gene:17587242"/>
<dbReference type="KEGG" id="stt:t3128"/>
<dbReference type="KEGG" id="sty:STY3387"/>
<dbReference type="PATRIC" id="fig|220341.7.peg.3448"/>
<dbReference type="eggNOG" id="COG0533">
    <property type="taxonomic scope" value="Bacteria"/>
</dbReference>
<dbReference type="HOGENOM" id="CLU_023208_0_0_6"/>
<dbReference type="OMA" id="NAAMIGC"/>
<dbReference type="OrthoDB" id="9806197at2"/>
<dbReference type="Proteomes" id="UP000000541">
    <property type="component" value="Chromosome"/>
</dbReference>
<dbReference type="Proteomes" id="UP000002670">
    <property type="component" value="Chromosome"/>
</dbReference>
<dbReference type="GO" id="GO:0005737">
    <property type="term" value="C:cytoplasm"/>
    <property type="evidence" value="ECO:0007669"/>
    <property type="project" value="UniProtKB-SubCell"/>
</dbReference>
<dbReference type="GO" id="GO:0005506">
    <property type="term" value="F:iron ion binding"/>
    <property type="evidence" value="ECO:0007669"/>
    <property type="project" value="UniProtKB-UniRule"/>
</dbReference>
<dbReference type="GO" id="GO:0061711">
    <property type="term" value="F:N(6)-L-threonylcarbamoyladenine synthase activity"/>
    <property type="evidence" value="ECO:0007669"/>
    <property type="project" value="UniProtKB-EC"/>
</dbReference>
<dbReference type="GO" id="GO:0002949">
    <property type="term" value="P:tRNA threonylcarbamoyladenosine modification"/>
    <property type="evidence" value="ECO:0007669"/>
    <property type="project" value="UniProtKB-UniRule"/>
</dbReference>
<dbReference type="CDD" id="cd24097">
    <property type="entry name" value="ASKHA_NBD_TsaD-like"/>
    <property type="match status" value="1"/>
</dbReference>
<dbReference type="FunFam" id="3.30.420.40:FF:000031">
    <property type="entry name" value="tRNA N6-adenosine threonylcarbamoyltransferase"/>
    <property type="match status" value="1"/>
</dbReference>
<dbReference type="Gene3D" id="3.30.420.40">
    <property type="match status" value="2"/>
</dbReference>
<dbReference type="HAMAP" id="MF_01445">
    <property type="entry name" value="TsaD"/>
    <property type="match status" value="1"/>
</dbReference>
<dbReference type="InterPro" id="IPR043129">
    <property type="entry name" value="ATPase_NBD"/>
</dbReference>
<dbReference type="InterPro" id="IPR000905">
    <property type="entry name" value="Gcp-like_dom"/>
</dbReference>
<dbReference type="InterPro" id="IPR017861">
    <property type="entry name" value="KAE1/TsaD"/>
</dbReference>
<dbReference type="InterPro" id="IPR017860">
    <property type="entry name" value="Peptidase_M22_CS"/>
</dbReference>
<dbReference type="InterPro" id="IPR022450">
    <property type="entry name" value="TsaD"/>
</dbReference>
<dbReference type="NCBIfam" id="TIGR00329">
    <property type="entry name" value="gcp_kae1"/>
    <property type="match status" value="1"/>
</dbReference>
<dbReference type="NCBIfam" id="TIGR03723">
    <property type="entry name" value="T6A_TsaD_YgjD"/>
    <property type="match status" value="1"/>
</dbReference>
<dbReference type="PANTHER" id="PTHR11735">
    <property type="entry name" value="TRNA N6-ADENOSINE THREONYLCARBAMOYLTRANSFERASE"/>
    <property type="match status" value="1"/>
</dbReference>
<dbReference type="PANTHER" id="PTHR11735:SF6">
    <property type="entry name" value="TRNA N6-ADENOSINE THREONYLCARBAMOYLTRANSFERASE, MITOCHONDRIAL"/>
    <property type="match status" value="1"/>
</dbReference>
<dbReference type="Pfam" id="PF00814">
    <property type="entry name" value="TsaD"/>
    <property type="match status" value="1"/>
</dbReference>
<dbReference type="PRINTS" id="PR00789">
    <property type="entry name" value="OSIALOPTASE"/>
</dbReference>
<dbReference type="SUPFAM" id="SSF53067">
    <property type="entry name" value="Actin-like ATPase domain"/>
    <property type="match status" value="1"/>
</dbReference>
<dbReference type="PROSITE" id="PS01016">
    <property type="entry name" value="GLYCOPROTEASE"/>
    <property type="match status" value="1"/>
</dbReference>
<organism>
    <name type="scientific">Salmonella typhi</name>
    <dbReference type="NCBI Taxonomy" id="90370"/>
    <lineage>
        <taxon>Bacteria</taxon>
        <taxon>Pseudomonadati</taxon>
        <taxon>Pseudomonadota</taxon>
        <taxon>Gammaproteobacteria</taxon>
        <taxon>Enterobacterales</taxon>
        <taxon>Enterobacteriaceae</taxon>
        <taxon>Salmonella</taxon>
    </lineage>
</organism>
<feature type="chain" id="PRO_1000024450" description="tRNA N6-adenosine threonylcarbamoyltransferase">
    <location>
        <begin position="1"/>
        <end position="337"/>
    </location>
</feature>
<feature type="binding site" evidence="1">
    <location>
        <position position="111"/>
    </location>
    <ligand>
        <name>Fe cation</name>
        <dbReference type="ChEBI" id="CHEBI:24875"/>
    </ligand>
</feature>
<feature type="binding site" evidence="1">
    <location>
        <position position="115"/>
    </location>
    <ligand>
        <name>Fe cation</name>
        <dbReference type="ChEBI" id="CHEBI:24875"/>
    </ligand>
</feature>
<feature type="binding site" evidence="1">
    <location>
        <begin position="134"/>
        <end position="138"/>
    </location>
    <ligand>
        <name>substrate</name>
    </ligand>
</feature>
<feature type="binding site" evidence="1">
    <location>
        <position position="167"/>
    </location>
    <ligand>
        <name>substrate</name>
    </ligand>
</feature>
<feature type="binding site" evidence="1">
    <location>
        <position position="180"/>
    </location>
    <ligand>
        <name>substrate</name>
    </ligand>
</feature>
<feature type="binding site" evidence="1">
    <location>
        <position position="272"/>
    </location>
    <ligand>
        <name>substrate</name>
    </ligand>
</feature>
<feature type="binding site" evidence="1">
    <location>
        <position position="300"/>
    </location>
    <ligand>
        <name>Fe cation</name>
        <dbReference type="ChEBI" id="CHEBI:24875"/>
    </ligand>
</feature>
<gene>
    <name evidence="1" type="primary">tsaD</name>
    <name type="synonym">gcp</name>
    <name type="ordered locus">STY3387</name>
    <name type="ordered locus">t3128</name>
</gene>
<proteinExistence type="inferred from homology"/>